<proteinExistence type="inferred from homology"/>
<organism>
    <name type="scientific">Neisseria meningitidis serogroup B (strain ATCC BAA-335 / MC58)</name>
    <dbReference type="NCBI Taxonomy" id="122586"/>
    <lineage>
        <taxon>Bacteria</taxon>
        <taxon>Pseudomonadati</taxon>
        <taxon>Pseudomonadota</taxon>
        <taxon>Betaproteobacteria</taxon>
        <taxon>Neisseriales</taxon>
        <taxon>Neisseriaceae</taxon>
        <taxon>Neisseria</taxon>
    </lineage>
</organism>
<sequence>MSSIKRALISLSDKTGAVEFAQTLHKLGVEILSTGGTAKLLADAGVPVIEVADYTGFPEMLDGRVKTLHPKIHGGILGRRDLDEHVAKMEEHGIGNIDLVCVNLYLFAATIAKPNCTLEDAIENIDIGGPTMVRSAAKNWKHVAIVTDTADFPAIAAELEANNGALSDKTRFNLSRKAFSHTAQYDGMISNYLTSLSDDVLSGTPEIAGFPGRFNQSWIKVQDMRYGENPHQRAAFYRDIDPAAGSLAAYKQLQGKELSYNNIADADAAWEAVKSFDVPACVIVKHANPCGVAIASNTLDAYKLAYATDTTSAFGGIIAFNREVDGATVKQITDNQFMEVLMAPKFTAEALEIAAAKKNVRVLEVPLEAGANRFELKRVGGGLLVQTPDIHRISRADLKVVSKRQPTEQEWNDLLFVWNVAKYVKSNAIVFGKGGQTYGIGAGQMSRVDSTRIAARKAQDAGLDLNGACAASDAFFPFRDGVDVIAEQGIKAIIHPAGSMRDQEVFDAADEHGIAMVVTGIRHFRH</sequence>
<evidence type="ECO:0000255" key="1">
    <source>
        <dbReference type="HAMAP-Rule" id="MF_00139"/>
    </source>
</evidence>
<evidence type="ECO:0000255" key="2">
    <source>
        <dbReference type="PROSITE-ProRule" id="PRU01202"/>
    </source>
</evidence>
<gene>
    <name evidence="1" type="primary">purH</name>
    <name type="ordered locus">NMB0983</name>
</gene>
<accession>Q9JZM7</accession>
<feature type="chain" id="PRO_0000192109" description="Bifunctional purine biosynthesis protein PurH">
    <location>
        <begin position="1"/>
        <end position="526"/>
    </location>
</feature>
<feature type="domain" description="MGS-like" evidence="2">
    <location>
        <begin position="1"/>
        <end position="147"/>
    </location>
</feature>
<protein>
    <recommendedName>
        <fullName evidence="1">Bifunctional purine biosynthesis protein PurH</fullName>
    </recommendedName>
    <domain>
        <recommendedName>
            <fullName evidence="1">Phosphoribosylaminoimidazolecarboxamide formyltransferase</fullName>
            <ecNumber evidence="1">2.1.2.3</ecNumber>
        </recommendedName>
        <alternativeName>
            <fullName evidence="1">AICAR transformylase</fullName>
        </alternativeName>
    </domain>
    <domain>
        <recommendedName>
            <fullName evidence="1">IMP cyclohydrolase</fullName>
            <ecNumber evidence="1">3.5.4.10</ecNumber>
        </recommendedName>
        <alternativeName>
            <fullName evidence="1">ATIC</fullName>
        </alternativeName>
        <alternativeName>
            <fullName evidence="1">IMP synthase</fullName>
        </alternativeName>
        <alternativeName>
            <fullName evidence="1">Inosinicase</fullName>
        </alternativeName>
    </domain>
</protein>
<name>PUR9_NEIMB</name>
<reference key="1">
    <citation type="journal article" date="2000" name="Science">
        <title>Complete genome sequence of Neisseria meningitidis serogroup B strain MC58.</title>
        <authorList>
            <person name="Tettelin H."/>
            <person name="Saunders N.J."/>
            <person name="Heidelberg J.F."/>
            <person name="Jeffries A.C."/>
            <person name="Nelson K.E."/>
            <person name="Eisen J.A."/>
            <person name="Ketchum K.A."/>
            <person name="Hood D.W."/>
            <person name="Peden J.F."/>
            <person name="Dodson R.J."/>
            <person name="Nelson W.C."/>
            <person name="Gwinn M.L."/>
            <person name="DeBoy R.T."/>
            <person name="Peterson J.D."/>
            <person name="Hickey E.K."/>
            <person name="Haft D.H."/>
            <person name="Salzberg S.L."/>
            <person name="White O."/>
            <person name="Fleischmann R.D."/>
            <person name="Dougherty B.A."/>
            <person name="Mason T.M."/>
            <person name="Ciecko A."/>
            <person name="Parksey D.S."/>
            <person name="Blair E."/>
            <person name="Cittone H."/>
            <person name="Clark E.B."/>
            <person name="Cotton M.D."/>
            <person name="Utterback T.R."/>
            <person name="Khouri H.M."/>
            <person name="Qin H."/>
            <person name="Vamathevan J.J."/>
            <person name="Gill J."/>
            <person name="Scarlato V."/>
            <person name="Masignani V."/>
            <person name="Pizza M."/>
            <person name="Grandi G."/>
            <person name="Sun L."/>
            <person name="Smith H.O."/>
            <person name="Fraser C.M."/>
            <person name="Moxon E.R."/>
            <person name="Rappuoli R."/>
            <person name="Venter J.C."/>
        </authorList>
    </citation>
    <scope>NUCLEOTIDE SEQUENCE [LARGE SCALE GENOMIC DNA]</scope>
    <source>
        <strain>ATCC BAA-335 / MC58</strain>
    </source>
</reference>
<dbReference type="EC" id="2.1.2.3" evidence="1"/>
<dbReference type="EC" id="3.5.4.10" evidence="1"/>
<dbReference type="EMBL" id="AE002098">
    <property type="protein sequence ID" value="AAF41387.1"/>
    <property type="molecule type" value="Genomic_DNA"/>
</dbReference>
<dbReference type="PIR" id="A81135">
    <property type="entry name" value="A81135"/>
</dbReference>
<dbReference type="RefSeq" id="NP_274020.1">
    <property type="nucleotide sequence ID" value="NC_003112.2"/>
</dbReference>
<dbReference type="RefSeq" id="WP_010980881.1">
    <property type="nucleotide sequence ID" value="NC_003112.2"/>
</dbReference>
<dbReference type="SMR" id="Q9JZM7"/>
<dbReference type="FunCoup" id="Q9JZM7">
    <property type="interactions" value="467"/>
</dbReference>
<dbReference type="STRING" id="122586.NMB0983"/>
<dbReference type="PaxDb" id="122586-NMB0983"/>
<dbReference type="KEGG" id="nme:NMB0983"/>
<dbReference type="PATRIC" id="fig|122586.8.peg.1243"/>
<dbReference type="HOGENOM" id="CLU_016316_5_2_4"/>
<dbReference type="InParanoid" id="Q9JZM7"/>
<dbReference type="OrthoDB" id="9802065at2"/>
<dbReference type="UniPathway" id="UPA00074">
    <property type="reaction ID" value="UER00133"/>
</dbReference>
<dbReference type="UniPathway" id="UPA00074">
    <property type="reaction ID" value="UER00135"/>
</dbReference>
<dbReference type="Proteomes" id="UP000000425">
    <property type="component" value="Chromosome"/>
</dbReference>
<dbReference type="GO" id="GO:0005829">
    <property type="term" value="C:cytosol"/>
    <property type="evidence" value="ECO:0000318"/>
    <property type="project" value="GO_Central"/>
</dbReference>
<dbReference type="GO" id="GO:0003937">
    <property type="term" value="F:IMP cyclohydrolase activity"/>
    <property type="evidence" value="ECO:0000318"/>
    <property type="project" value="GO_Central"/>
</dbReference>
<dbReference type="GO" id="GO:0004643">
    <property type="term" value="F:phosphoribosylaminoimidazolecarboxamide formyltransferase activity"/>
    <property type="evidence" value="ECO:0000318"/>
    <property type="project" value="GO_Central"/>
</dbReference>
<dbReference type="GO" id="GO:0006189">
    <property type="term" value="P:'de novo' IMP biosynthetic process"/>
    <property type="evidence" value="ECO:0000318"/>
    <property type="project" value="GO_Central"/>
</dbReference>
<dbReference type="CDD" id="cd01421">
    <property type="entry name" value="IMPCH"/>
    <property type="match status" value="1"/>
</dbReference>
<dbReference type="FunFam" id="3.40.140.20:FF:000001">
    <property type="entry name" value="Bifunctional purine biosynthesis protein PurH"/>
    <property type="match status" value="1"/>
</dbReference>
<dbReference type="FunFam" id="3.40.140.20:FF:000002">
    <property type="entry name" value="Bifunctional purine biosynthesis protein PurH"/>
    <property type="match status" value="1"/>
</dbReference>
<dbReference type="FunFam" id="3.40.50.1380:FF:000001">
    <property type="entry name" value="Bifunctional purine biosynthesis protein PurH"/>
    <property type="match status" value="1"/>
</dbReference>
<dbReference type="Gene3D" id="3.40.140.20">
    <property type="match status" value="2"/>
</dbReference>
<dbReference type="Gene3D" id="3.40.50.1380">
    <property type="entry name" value="Methylglyoxal synthase-like domain"/>
    <property type="match status" value="1"/>
</dbReference>
<dbReference type="HAMAP" id="MF_00139">
    <property type="entry name" value="PurH"/>
    <property type="match status" value="1"/>
</dbReference>
<dbReference type="InterPro" id="IPR024051">
    <property type="entry name" value="AICAR_Tfase_dup_dom_sf"/>
</dbReference>
<dbReference type="InterPro" id="IPR016193">
    <property type="entry name" value="Cytidine_deaminase-like"/>
</dbReference>
<dbReference type="InterPro" id="IPR011607">
    <property type="entry name" value="MGS-like_dom"/>
</dbReference>
<dbReference type="InterPro" id="IPR036914">
    <property type="entry name" value="MGS-like_dom_sf"/>
</dbReference>
<dbReference type="InterPro" id="IPR002695">
    <property type="entry name" value="PurH-like"/>
</dbReference>
<dbReference type="NCBIfam" id="NF002049">
    <property type="entry name" value="PRK00881.1"/>
    <property type="match status" value="1"/>
</dbReference>
<dbReference type="NCBIfam" id="TIGR00355">
    <property type="entry name" value="purH"/>
    <property type="match status" value="1"/>
</dbReference>
<dbReference type="PANTHER" id="PTHR11692:SF0">
    <property type="entry name" value="BIFUNCTIONAL PURINE BIOSYNTHESIS PROTEIN ATIC"/>
    <property type="match status" value="1"/>
</dbReference>
<dbReference type="PANTHER" id="PTHR11692">
    <property type="entry name" value="BIFUNCTIONAL PURINE BIOSYNTHESIS PROTEIN PURH"/>
    <property type="match status" value="1"/>
</dbReference>
<dbReference type="Pfam" id="PF01808">
    <property type="entry name" value="AICARFT_IMPCHas"/>
    <property type="match status" value="1"/>
</dbReference>
<dbReference type="Pfam" id="PF02142">
    <property type="entry name" value="MGS"/>
    <property type="match status" value="1"/>
</dbReference>
<dbReference type="PIRSF" id="PIRSF000414">
    <property type="entry name" value="AICARFT_IMPCHas"/>
    <property type="match status" value="1"/>
</dbReference>
<dbReference type="SMART" id="SM00798">
    <property type="entry name" value="AICARFT_IMPCHas"/>
    <property type="match status" value="1"/>
</dbReference>
<dbReference type="SMART" id="SM00851">
    <property type="entry name" value="MGS"/>
    <property type="match status" value="1"/>
</dbReference>
<dbReference type="SUPFAM" id="SSF53927">
    <property type="entry name" value="Cytidine deaminase-like"/>
    <property type="match status" value="1"/>
</dbReference>
<dbReference type="SUPFAM" id="SSF52335">
    <property type="entry name" value="Methylglyoxal synthase-like"/>
    <property type="match status" value="1"/>
</dbReference>
<dbReference type="PROSITE" id="PS51855">
    <property type="entry name" value="MGS"/>
    <property type="match status" value="1"/>
</dbReference>
<keyword id="KW-0378">Hydrolase</keyword>
<keyword id="KW-0511">Multifunctional enzyme</keyword>
<keyword id="KW-0658">Purine biosynthesis</keyword>
<keyword id="KW-1185">Reference proteome</keyword>
<keyword id="KW-0808">Transferase</keyword>
<comment type="catalytic activity">
    <reaction evidence="1">
        <text>(6R)-10-formyltetrahydrofolate + 5-amino-1-(5-phospho-beta-D-ribosyl)imidazole-4-carboxamide = 5-formamido-1-(5-phospho-D-ribosyl)imidazole-4-carboxamide + (6S)-5,6,7,8-tetrahydrofolate</text>
        <dbReference type="Rhea" id="RHEA:22192"/>
        <dbReference type="ChEBI" id="CHEBI:57453"/>
        <dbReference type="ChEBI" id="CHEBI:58467"/>
        <dbReference type="ChEBI" id="CHEBI:58475"/>
        <dbReference type="ChEBI" id="CHEBI:195366"/>
        <dbReference type="EC" id="2.1.2.3"/>
    </reaction>
</comment>
<comment type="catalytic activity">
    <reaction evidence="1">
        <text>IMP + H2O = 5-formamido-1-(5-phospho-D-ribosyl)imidazole-4-carboxamide</text>
        <dbReference type="Rhea" id="RHEA:18445"/>
        <dbReference type="ChEBI" id="CHEBI:15377"/>
        <dbReference type="ChEBI" id="CHEBI:58053"/>
        <dbReference type="ChEBI" id="CHEBI:58467"/>
        <dbReference type="EC" id="3.5.4.10"/>
    </reaction>
</comment>
<comment type="pathway">
    <text evidence="1">Purine metabolism; IMP biosynthesis via de novo pathway; 5-formamido-1-(5-phospho-D-ribosyl)imidazole-4-carboxamide from 5-amino-1-(5-phospho-D-ribosyl)imidazole-4-carboxamide (10-formyl THF route): step 1/1.</text>
</comment>
<comment type="pathway">
    <text evidence="1">Purine metabolism; IMP biosynthesis via de novo pathway; IMP from 5-formamido-1-(5-phospho-D-ribosyl)imidazole-4-carboxamide: step 1/1.</text>
</comment>
<comment type="domain">
    <text evidence="1">The IMP cyclohydrolase activity resides in the N-terminal region.</text>
</comment>
<comment type="similarity">
    <text evidence="1">Belongs to the PurH family.</text>
</comment>